<feature type="chain" id="PRO_0000261888" description="Glucose-1-phosphate adenylyltransferase">
    <location>
        <begin position="1"/>
        <end position="420"/>
    </location>
</feature>
<feature type="binding site" evidence="1">
    <location>
        <position position="107"/>
    </location>
    <ligand>
        <name>alpha-D-glucose 1-phosphate</name>
        <dbReference type="ChEBI" id="CHEBI:58601"/>
    </ligand>
</feature>
<feature type="binding site" evidence="1">
    <location>
        <position position="172"/>
    </location>
    <ligand>
        <name>alpha-D-glucose 1-phosphate</name>
        <dbReference type="ChEBI" id="CHEBI:58601"/>
    </ligand>
</feature>
<feature type="binding site" evidence="1">
    <location>
        <begin position="187"/>
        <end position="188"/>
    </location>
    <ligand>
        <name>alpha-D-glucose 1-phosphate</name>
        <dbReference type="ChEBI" id="CHEBI:58601"/>
    </ligand>
</feature>
<feature type="binding site" evidence="1">
    <location>
        <position position="205"/>
    </location>
    <ligand>
        <name>alpha-D-glucose 1-phosphate</name>
        <dbReference type="ChEBI" id="CHEBI:58601"/>
    </ligand>
</feature>
<evidence type="ECO:0000255" key="1">
    <source>
        <dbReference type="HAMAP-Rule" id="MF_00624"/>
    </source>
</evidence>
<comment type="function">
    <text evidence="1">Involved in the biosynthesis of ADP-glucose, a building block required for the elongation reactions to produce glycogen. Catalyzes the reaction between ATP and alpha-D-glucose 1-phosphate (G1P) to produce pyrophosphate and ADP-Glc.</text>
</comment>
<comment type="catalytic activity">
    <reaction evidence="1">
        <text>alpha-D-glucose 1-phosphate + ATP + H(+) = ADP-alpha-D-glucose + diphosphate</text>
        <dbReference type="Rhea" id="RHEA:12120"/>
        <dbReference type="ChEBI" id="CHEBI:15378"/>
        <dbReference type="ChEBI" id="CHEBI:30616"/>
        <dbReference type="ChEBI" id="CHEBI:33019"/>
        <dbReference type="ChEBI" id="CHEBI:57498"/>
        <dbReference type="ChEBI" id="CHEBI:58601"/>
        <dbReference type="EC" id="2.7.7.27"/>
    </reaction>
</comment>
<comment type="pathway">
    <text evidence="1">Glycan biosynthesis; glycogen biosynthesis.</text>
</comment>
<comment type="subunit">
    <text evidence="1">Homotetramer.</text>
</comment>
<comment type="similarity">
    <text evidence="1">Belongs to the bacterial/plant glucose-1-phosphate adenylyltransferase family.</text>
</comment>
<reference key="1">
    <citation type="journal article" date="2006" name="Genome Biol.">
        <title>The genome of Rhizobium leguminosarum has recognizable core and accessory components.</title>
        <authorList>
            <person name="Young J.P.W."/>
            <person name="Crossman L.C."/>
            <person name="Johnston A.W.B."/>
            <person name="Thomson N.R."/>
            <person name="Ghazoui Z.F."/>
            <person name="Hull K.H."/>
            <person name="Wexler M."/>
            <person name="Curson A.R.J."/>
            <person name="Todd J.D."/>
            <person name="Poole P.S."/>
            <person name="Mauchline T.H."/>
            <person name="East A.K."/>
            <person name="Quail M.A."/>
            <person name="Churcher C."/>
            <person name="Arrowsmith C."/>
            <person name="Cherevach I."/>
            <person name="Chillingworth T."/>
            <person name="Clarke K."/>
            <person name="Cronin A."/>
            <person name="Davis P."/>
            <person name="Fraser A."/>
            <person name="Hance Z."/>
            <person name="Hauser H."/>
            <person name="Jagels K."/>
            <person name="Moule S."/>
            <person name="Mungall K."/>
            <person name="Norbertczak H."/>
            <person name="Rabbinowitsch E."/>
            <person name="Sanders M."/>
            <person name="Simmonds M."/>
            <person name="Whitehead S."/>
            <person name="Parkhill J."/>
        </authorList>
    </citation>
    <scope>NUCLEOTIDE SEQUENCE [LARGE SCALE GENOMIC DNA]</scope>
    <source>
        <strain>DSM 114642 / LMG 32736 / 3841</strain>
    </source>
</reference>
<gene>
    <name evidence="1" type="primary">glgC</name>
    <name type="ordered locus">RL4116</name>
</gene>
<protein>
    <recommendedName>
        <fullName evidence="1">Glucose-1-phosphate adenylyltransferase</fullName>
        <ecNumber evidence="1">2.7.7.27</ecNumber>
    </recommendedName>
    <alternativeName>
        <fullName evidence="1">ADP-glucose pyrophosphorylase</fullName>
        <shortName evidence="1">ADPGlc PPase</shortName>
    </alternativeName>
    <alternativeName>
        <fullName evidence="1">ADP-glucose synthase</fullName>
    </alternativeName>
</protein>
<organism>
    <name type="scientific">Rhizobium johnstonii (strain DSM 114642 / LMG 32736 / 3841)</name>
    <name type="common">Rhizobium leguminosarum bv. viciae</name>
    <dbReference type="NCBI Taxonomy" id="216596"/>
    <lineage>
        <taxon>Bacteria</taxon>
        <taxon>Pseudomonadati</taxon>
        <taxon>Pseudomonadota</taxon>
        <taxon>Alphaproteobacteria</taxon>
        <taxon>Hyphomicrobiales</taxon>
        <taxon>Rhizobiaceae</taxon>
        <taxon>Rhizobium/Agrobacterium group</taxon>
        <taxon>Rhizobium</taxon>
        <taxon>Rhizobium johnstonii</taxon>
    </lineage>
</organism>
<sequence length="420" mass="47113">MVEKRVQPLARDAMAYVLAGGRGSRLKELTDRRAKPAVYFGGKARIIDFALSNALNSGIRRIGVATQYKAHSLIRHMQRGWNFFRPERNESFDILPASQRVSETQWYEGTADAVYQNIDIIQDYGVEYMVILAGDHVYKMDYEWMLQQHVDSGADVTIGCLEVPRMEAVGFGVMHVNDKDEIIAFVEKPADPPPIPDKPDFALASMGIYVFHTKFLLDALRRDAADPNSSRDFGKDIIPYIVKNGKAVAHRFAKSCVRSDFEHEPYWRDVGTIDAYWQANIDLTAIVPELDIYDKSWPIWTYAEITPPAKFVHDDEDRRGSATSSVVSGDCIISGAMLNNSLLFTGVRANSFSKMEGAVILPNVKIGRRAQLKNVVIDHGVVIPEGLVVGEDAELDAKRFRRTESGICLITQPMIDKLDI</sequence>
<dbReference type="EC" id="2.7.7.27" evidence="1"/>
<dbReference type="EMBL" id="AM236080">
    <property type="protein sequence ID" value="CAK09605.1"/>
    <property type="molecule type" value="Genomic_DNA"/>
</dbReference>
<dbReference type="RefSeq" id="WP_011653524.1">
    <property type="nucleotide sequence ID" value="NC_008380.1"/>
</dbReference>
<dbReference type="SMR" id="Q1MBS8"/>
<dbReference type="EnsemblBacteria" id="CAK09605">
    <property type="protein sequence ID" value="CAK09605"/>
    <property type="gene ID" value="RL4116"/>
</dbReference>
<dbReference type="KEGG" id="rle:RL4116"/>
<dbReference type="eggNOG" id="COG0448">
    <property type="taxonomic scope" value="Bacteria"/>
</dbReference>
<dbReference type="HOGENOM" id="CLU_029499_14_1_5"/>
<dbReference type="UniPathway" id="UPA00164"/>
<dbReference type="Proteomes" id="UP000006575">
    <property type="component" value="Chromosome"/>
</dbReference>
<dbReference type="GO" id="GO:0005524">
    <property type="term" value="F:ATP binding"/>
    <property type="evidence" value="ECO:0007669"/>
    <property type="project" value="UniProtKB-KW"/>
</dbReference>
<dbReference type="GO" id="GO:0008878">
    <property type="term" value="F:glucose-1-phosphate adenylyltransferase activity"/>
    <property type="evidence" value="ECO:0007669"/>
    <property type="project" value="UniProtKB-UniRule"/>
</dbReference>
<dbReference type="GO" id="GO:0005978">
    <property type="term" value="P:glycogen biosynthetic process"/>
    <property type="evidence" value="ECO:0007669"/>
    <property type="project" value="UniProtKB-UniRule"/>
</dbReference>
<dbReference type="CDD" id="cd02508">
    <property type="entry name" value="ADP_Glucose_PP"/>
    <property type="match status" value="1"/>
</dbReference>
<dbReference type="CDD" id="cd04651">
    <property type="entry name" value="LbH_G1P_AT_C"/>
    <property type="match status" value="1"/>
</dbReference>
<dbReference type="Gene3D" id="2.160.10.10">
    <property type="entry name" value="Hexapeptide repeat proteins"/>
    <property type="match status" value="1"/>
</dbReference>
<dbReference type="Gene3D" id="3.90.550.10">
    <property type="entry name" value="Spore Coat Polysaccharide Biosynthesis Protein SpsA, Chain A"/>
    <property type="match status" value="1"/>
</dbReference>
<dbReference type="HAMAP" id="MF_00624">
    <property type="entry name" value="GlgC"/>
    <property type="match status" value="1"/>
</dbReference>
<dbReference type="InterPro" id="IPR011831">
    <property type="entry name" value="ADP-Glc_PPase"/>
</dbReference>
<dbReference type="InterPro" id="IPR005836">
    <property type="entry name" value="ADP_Glu_pyroP_CS"/>
</dbReference>
<dbReference type="InterPro" id="IPR023049">
    <property type="entry name" value="GlgC_bac"/>
</dbReference>
<dbReference type="InterPro" id="IPR056818">
    <property type="entry name" value="GlmU/GlgC-like_hexapep"/>
</dbReference>
<dbReference type="InterPro" id="IPR005835">
    <property type="entry name" value="NTP_transferase_dom"/>
</dbReference>
<dbReference type="InterPro" id="IPR029044">
    <property type="entry name" value="Nucleotide-diphossugar_trans"/>
</dbReference>
<dbReference type="InterPro" id="IPR011004">
    <property type="entry name" value="Trimer_LpxA-like_sf"/>
</dbReference>
<dbReference type="NCBIfam" id="TIGR02091">
    <property type="entry name" value="glgC"/>
    <property type="match status" value="1"/>
</dbReference>
<dbReference type="NCBIfam" id="NF001947">
    <property type="entry name" value="PRK00725.1"/>
    <property type="match status" value="1"/>
</dbReference>
<dbReference type="NCBIfam" id="NF002023">
    <property type="entry name" value="PRK00844.1"/>
    <property type="match status" value="1"/>
</dbReference>
<dbReference type="PANTHER" id="PTHR43523:SF2">
    <property type="entry name" value="GLUCOSE-1-PHOSPHATE ADENYLYLTRANSFERASE"/>
    <property type="match status" value="1"/>
</dbReference>
<dbReference type="PANTHER" id="PTHR43523">
    <property type="entry name" value="GLUCOSE-1-PHOSPHATE ADENYLYLTRANSFERASE-RELATED"/>
    <property type="match status" value="1"/>
</dbReference>
<dbReference type="Pfam" id="PF24894">
    <property type="entry name" value="Hexapep_GlmU"/>
    <property type="match status" value="1"/>
</dbReference>
<dbReference type="Pfam" id="PF00483">
    <property type="entry name" value="NTP_transferase"/>
    <property type="match status" value="1"/>
</dbReference>
<dbReference type="SUPFAM" id="SSF53448">
    <property type="entry name" value="Nucleotide-diphospho-sugar transferases"/>
    <property type="match status" value="1"/>
</dbReference>
<dbReference type="SUPFAM" id="SSF51161">
    <property type="entry name" value="Trimeric LpxA-like enzymes"/>
    <property type="match status" value="1"/>
</dbReference>
<dbReference type="PROSITE" id="PS00808">
    <property type="entry name" value="ADP_GLC_PYROPHOSPH_1"/>
    <property type="match status" value="1"/>
</dbReference>
<dbReference type="PROSITE" id="PS00809">
    <property type="entry name" value="ADP_GLC_PYROPHOSPH_2"/>
    <property type="match status" value="1"/>
</dbReference>
<dbReference type="PROSITE" id="PS00810">
    <property type="entry name" value="ADP_GLC_PYROPHOSPH_3"/>
    <property type="match status" value="1"/>
</dbReference>
<proteinExistence type="inferred from homology"/>
<name>GLGC_RHIJ3</name>
<accession>Q1MBS8</accession>
<keyword id="KW-0067">ATP-binding</keyword>
<keyword id="KW-0119">Carbohydrate metabolism</keyword>
<keyword id="KW-0320">Glycogen biosynthesis</keyword>
<keyword id="KW-0321">Glycogen metabolism</keyword>
<keyword id="KW-0547">Nucleotide-binding</keyword>
<keyword id="KW-0548">Nucleotidyltransferase</keyword>
<keyword id="KW-0808">Transferase</keyword>